<protein>
    <recommendedName>
        <fullName evidence="1">Small ribosomal subunit protein bS16</fullName>
    </recommendedName>
    <alternativeName>
        <fullName evidence="2">30S ribosomal protein S16</fullName>
    </alternativeName>
</protein>
<organism>
    <name type="scientific">Prochlorococcus marinus subsp. pastoris (strain CCMP1986 / NIES-2087 / MED4)</name>
    <dbReference type="NCBI Taxonomy" id="59919"/>
    <lineage>
        <taxon>Bacteria</taxon>
        <taxon>Bacillati</taxon>
        <taxon>Cyanobacteriota</taxon>
        <taxon>Cyanophyceae</taxon>
        <taxon>Synechococcales</taxon>
        <taxon>Prochlorococcaceae</taxon>
        <taxon>Prochlorococcus</taxon>
    </lineage>
</organism>
<keyword id="KW-0687">Ribonucleoprotein</keyword>
<keyword id="KW-0689">Ribosomal protein</keyword>
<accession>Q7TU65</accession>
<gene>
    <name evidence="1" type="primary">rpsP</name>
    <name evidence="1" type="synonym">rps16</name>
    <name type="ordered locus">PMM1285</name>
</gene>
<evidence type="ECO:0000255" key="1">
    <source>
        <dbReference type="HAMAP-Rule" id="MF_00385"/>
    </source>
</evidence>
<evidence type="ECO:0000305" key="2"/>
<dbReference type="EMBL" id="BX548174">
    <property type="protein sequence ID" value="CAE19744.1"/>
    <property type="molecule type" value="Genomic_DNA"/>
</dbReference>
<dbReference type="RefSeq" id="WP_011132919.1">
    <property type="nucleotide sequence ID" value="NC_005072.1"/>
</dbReference>
<dbReference type="SMR" id="Q7TU65"/>
<dbReference type="STRING" id="59919.PMM1285"/>
<dbReference type="KEGG" id="pmm:PMM1285"/>
<dbReference type="eggNOG" id="COG0228">
    <property type="taxonomic scope" value="Bacteria"/>
</dbReference>
<dbReference type="HOGENOM" id="CLU_100590_3_2_3"/>
<dbReference type="OrthoDB" id="9807878at2"/>
<dbReference type="Proteomes" id="UP000001026">
    <property type="component" value="Chromosome"/>
</dbReference>
<dbReference type="GO" id="GO:0005737">
    <property type="term" value="C:cytoplasm"/>
    <property type="evidence" value="ECO:0007669"/>
    <property type="project" value="UniProtKB-ARBA"/>
</dbReference>
<dbReference type="GO" id="GO:0015935">
    <property type="term" value="C:small ribosomal subunit"/>
    <property type="evidence" value="ECO:0007669"/>
    <property type="project" value="TreeGrafter"/>
</dbReference>
<dbReference type="GO" id="GO:0003735">
    <property type="term" value="F:structural constituent of ribosome"/>
    <property type="evidence" value="ECO:0007669"/>
    <property type="project" value="InterPro"/>
</dbReference>
<dbReference type="GO" id="GO:0006412">
    <property type="term" value="P:translation"/>
    <property type="evidence" value="ECO:0007669"/>
    <property type="project" value="UniProtKB-UniRule"/>
</dbReference>
<dbReference type="Gene3D" id="3.30.1320.10">
    <property type="match status" value="1"/>
</dbReference>
<dbReference type="HAMAP" id="MF_00385">
    <property type="entry name" value="Ribosomal_bS16"/>
    <property type="match status" value="1"/>
</dbReference>
<dbReference type="InterPro" id="IPR000307">
    <property type="entry name" value="Ribosomal_bS16"/>
</dbReference>
<dbReference type="InterPro" id="IPR020592">
    <property type="entry name" value="Ribosomal_bS16_CS"/>
</dbReference>
<dbReference type="InterPro" id="IPR023803">
    <property type="entry name" value="Ribosomal_bS16_dom_sf"/>
</dbReference>
<dbReference type="NCBIfam" id="TIGR00002">
    <property type="entry name" value="S16"/>
    <property type="match status" value="1"/>
</dbReference>
<dbReference type="PANTHER" id="PTHR12919">
    <property type="entry name" value="30S RIBOSOMAL PROTEIN S16"/>
    <property type="match status" value="1"/>
</dbReference>
<dbReference type="PANTHER" id="PTHR12919:SF20">
    <property type="entry name" value="SMALL RIBOSOMAL SUBUNIT PROTEIN BS16M"/>
    <property type="match status" value="1"/>
</dbReference>
<dbReference type="Pfam" id="PF00886">
    <property type="entry name" value="Ribosomal_S16"/>
    <property type="match status" value="1"/>
</dbReference>
<dbReference type="SUPFAM" id="SSF54565">
    <property type="entry name" value="Ribosomal protein S16"/>
    <property type="match status" value="1"/>
</dbReference>
<dbReference type="PROSITE" id="PS00732">
    <property type="entry name" value="RIBOSOMAL_S16"/>
    <property type="match status" value="1"/>
</dbReference>
<reference key="1">
    <citation type="journal article" date="2003" name="Nature">
        <title>Genome divergence in two Prochlorococcus ecotypes reflects oceanic niche differentiation.</title>
        <authorList>
            <person name="Rocap G."/>
            <person name="Larimer F.W."/>
            <person name="Lamerdin J.E."/>
            <person name="Malfatti S."/>
            <person name="Chain P."/>
            <person name="Ahlgren N.A."/>
            <person name="Arellano A."/>
            <person name="Coleman M."/>
            <person name="Hauser L."/>
            <person name="Hess W.R."/>
            <person name="Johnson Z.I."/>
            <person name="Land M.L."/>
            <person name="Lindell D."/>
            <person name="Post A.F."/>
            <person name="Regala W."/>
            <person name="Shah M."/>
            <person name="Shaw S.L."/>
            <person name="Steglich C."/>
            <person name="Sullivan M.B."/>
            <person name="Ting C.S."/>
            <person name="Tolonen A."/>
            <person name="Webb E.A."/>
            <person name="Zinser E.R."/>
            <person name="Chisholm S.W."/>
        </authorList>
    </citation>
    <scope>NUCLEOTIDE SEQUENCE [LARGE SCALE GENOMIC DNA]</scope>
    <source>
        <strain>CCMP1986 / NIES-2087 / MED4</strain>
    </source>
</reference>
<proteinExistence type="inferred from homology"/>
<name>RS16_PROMP</name>
<feature type="chain" id="PRO_0000167225" description="Small ribosomal subunit protein bS16">
    <location>
        <begin position="1"/>
        <end position="114"/>
    </location>
</feature>
<sequence length="114" mass="12869">MIKLRLKRFGKKKEASFRIVACNSTSRRDGRPLQELGFYNPRTKETRLDTEALRIRLTQGAQPTDVVRTLLEKGGLLEKKVRPSIAIGKAKLEKEKIAKAKSKEAESDSKEAES</sequence>
<comment type="similarity">
    <text evidence="1">Belongs to the bacterial ribosomal protein bS16 family.</text>
</comment>